<proteinExistence type="inferred from homology"/>
<keyword id="KW-0030">Aminoacyl-tRNA synthetase</keyword>
<keyword id="KW-0067">ATP-binding</keyword>
<keyword id="KW-0963">Cytoplasm</keyword>
<keyword id="KW-0436">Ligase</keyword>
<keyword id="KW-0547">Nucleotide-binding</keyword>
<keyword id="KW-0648">Protein biosynthesis</keyword>
<keyword id="KW-1185">Reference proteome</keyword>
<comment type="catalytic activity">
    <reaction evidence="1">
        <text>tRNA(Arg) + L-arginine + ATP = L-arginyl-tRNA(Arg) + AMP + diphosphate</text>
        <dbReference type="Rhea" id="RHEA:20301"/>
        <dbReference type="Rhea" id="RHEA-COMP:9658"/>
        <dbReference type="Rhea" id="RHEA-COMP:9673"/>
        <dbReference type="ChEBI" id="CHEBI:30616"/>
        <dbReference type="ChEBI" id="CHEBI:32682"/>
        <dbReference type="ChEBI" id="CHEBI:33019"/>
        <dbReference type="ChEBI" id="CHEBI:78442"/>
        <dbReference type="ChEBI" id="CHEBI:78513"/>
        <dbReference type="ChEBI" id="CHEBI:456215"/>
        <dbReference type="EC" id="6.1.1.19"/>
    </reaction>
</comment>
<comment type="subunit">
    <text evidence="1">Monomer.</text>
</comment>
<comment type="subcellular location">
    <subcellularLocation>
        <location evidence="1">Cytoplasm</location>
    </subcellularLocation>
</comment>
<comment type="similarity">
    <text evidence="1">Belongs to the class-I aminoacyl-tRNA synthetase family.</text>
</comment>
<accession>A6VNB3</accession>
<organism>
    <name type="scientific">Actinobacillus succinogenes (strain ATCC 55618 / DSM 22257 / CCUG 43843 / 130Z)</name>
    <dbReference type="NCBI Taxonomy" id="339671"/>
    <lineage>
        <taxon>Bacteria</taxon>
        <taxon>Pseudomonadati</taxon>
        <taxon>Pseudomonadota</taxon>
        <taxon>Gammaproteobacteria</taxon>
        <taxon>Pasteurellales</taxon>
        <taxon>Pasteurellaceae</taxon>
        <taxon>Actinobacillus</taxon>
    </lineage>
</organism>
<reference key="1">
    <citation type="journal article" date="2010" name="BMC Genomics">
        <title>A genomic perspective on the potential of Actinobacillus succinogenes for industrial succinate production.</title>
        <authorList>
            <person name="McKinlay J.B."/>
            <person name="Laivenieks M."/>
            <person name="Schindler B.D."/>
            <person name="McKinlay A.A."/>
            <person name="Siddaramappa S."/>
            <person name="Challacombe J.F."/>
            <person name="Lowry S.R."/>
            <person name="Clum A."/>
            <person name="Lapidus A.L."/>
            <person name="Burkhart K.B."/>
            <person name="Harkins V."/>
            <person name="Vieille C."/>
        </authorList>
    </citation>
    <scope>NUCLEOTIDE SEQUENCE [LARGE SCALE GENOMIC DNA]</scope>
    <source>
        <strain>ATCC 55618 / DSM 22257 / CCUG 43843 / 130Z</strain>
    </source>
</reference>
<sequence>MNIQQLLSEKIRHAMIAAGAQQPAEPAVRQSGKPQFGDYQANGIMGAAKKLGLNPREFAQKVLDNLNLDGIAEKLEIAGPGFINIFLSKNWLVCHADEMLSAVNFGIKTAKPQTIVVDYSSPNVAKEMHVGHLRSTIIGDAVVRTLEFLGNHVIRANHVGDWGTQFGMLIAYLEKMENENASAMQLSDLEAFYRAAKEHYDNDEAFAEKARNYVVKLQSGDEYCRIMWKKLVDITMRHNQENYDRLNVTLTEKDVMGESLYNPMLPEIVADLKKQGLAVEDDGALVVYLDEFKNKDGDPMGVIVQKKDGGYLYTTTDIAAAKYRCHKLHADRVLVFSDSRQSQHMQQAWLITRKAGYVPDSFSLEHPFFGMMLGKDGKPFKTRTGGTVKLKDLLDEAVERADKLIAERNPDLTAEEKAAVVEAVAIGSVKYSDLSKNRTTDYVFDWDNMLTFEGNTAPYMQYAYTRIRSIFARAGIEPNSLNDDIVLTDDKERVLVIKLLQFEEALNGVAKDGMPHILCQYLYELAGMFSAFYEACPILNAERPIKNSRLKLAALAAKTLKQGLDLLGIKTVEKM</sequence>
<dbReference type="EC" id="6.1.1.19" evidence="1"/>
<dbReference type="EMBL" id="CP000746">
    <property type="protein sequence ID" value="ABR74460.1"/>
    <property type="molecule type" value="Genomic_DNA"/>
</dbReference>
<dbReference type="RefSeq" id="WP_012072837.1">
    <property type="nucleotide sequence ID" value="NC_009655.1"/>
</dbReference>
<dbReference type="SMR" id="A6VNB3"/>
<dbReference type="STRING" id="339671.Asuc_1094"/>
<dbReference type="KEGG" id="asu:Asuc_1094"/>
<dbReference type="eggNOG" id="COG0018">
    <property type="taxonomic scope" value="Bacteria"/>
</dbReference>
<dbReference type="HOGENOM" id="CLU_006406_5_1_6"/>
<dbReference type="OrthoDB" id="9803211at2"/>
<dbReference type="Proteomes" id="UP000001114">
    <property type="component" value="Chromosome"/>
</dbReference>
<dbReference type="GO" id="GO:0005737">
    <property type="term" value="C:cytoplasm"/>
    <property type="evidence" value="ECO:0007669"/>
    <property type="project" value="UniProtKB-SubCell"/>
</dbReference>
<dbReference type="GO" id="GO:0004814">
    <property type="term" value="F:arginine-tRNA ligase activity"/>
    <property type="evidence" value="ECO:0007669"/>
    <property type="project" value="UniProtKB-UniRule"/>
</dbReference>
<dbReference type="GO" id="GO:0005524">
    <property type="term" value="F:ATP binding"/>
    <property type="evidence" value="ECO:0007669"/>
    <property type="project" value="UniProtKB-UniRule"/>
</dbReference>
<dbReference type="GO" id="GO:0006420">
    <property type="term" value="P:arginyl-tRNA aminoacylation"/>
    <property type="evidence" value="ECO:0007669"/>
    <property type="project" value="UniProtKB-UniRule"/>
</dbReference>
<dbReference type="CDD" id="cd07956">
    <property type="entry name" value="Anticodon_Ia_Arg"/>
    <property type="match status" value="1"/>
</dbReference>
<dbReference type="CDD" id="cd00671">
    <property type="entry name" value="ArgRS_core"/>
    <property type="match status" value="1"/>
</dbReference>
<dbReference type="FunFam" id="1.10.730.10:FF:000008">
    <property type="entry name" value="Arginine--tRNA ligase"/>
    <property type="match status" value="1"/>
</dbReference>
<dbReference type="FunFam" id="3.40.50.620:FF:000030">
    <property type="entry name" value="Arginine--tRNA ligase"/>
    <property type="match status" value="1"/>
</dbReference>
<dbReference type="Gene3D" id="3.30.1360.70">
    <property type="entry name" value="Arginyl tRNA synthetase N-terminal domain"/>
    <property type="match status" value="1"/>
</dbReference>
<dbReference type="Gene3D" id="3.40.50.620">
    <property type="entry name" value="HUPs"/>
    <property type="match status" value="1"/>
</dbReference>
<dbReference type="Gene3D" id="1.10.730.10">
    <property type="entry name" value="Isoleucyl-tRNA Synthetase, Domain 1"/>
    <property type="match status" value="1"/>
</dbReference>
<dbReference type="HAMAP" id="MF_00123">
    <property type="entry name" value="Arg_tRNA_synth"/>
    <property type="match status" value="1"/>
</dbReference>
<dbReference type="InterPro" id="IPR001412">
    <property type="entry name" value="aa-tRNA-synth_I_CS"/>
</dbReference>
<dbReference type="InterPro" id="IPR001278">
    <property type="entry name" value="Arg-tRNA-ligase"/>
</dbReference>
<dbReference type="InterPro" id="IPR005148">
    <property type="entry name" value="Arg-tRNA-synth_N"/>
</dbReference>
<dbReference type="InterPro" id="IPR036695">
    <property type="entry name" value="Arg-tRNA-synth_N_sf"/>
</dbReference>
<dbReference type="InterPro" id="IPR035684">
    <property type="entry name" value="ArgRS_core"/>
</dbReference>
<dbReference type="InterPro" id="IPR008909">
    <property type="entry name" value="DALR_anticod-bd"/>
</dbReference>
<dbReference type="InterPro" id="IPR014729">
    <property type="entry name" value="Rossmann-like_a/b/a_fold"/>
</dbReference>
<dbReference type="InterPro" id="IPR009080">
    <property type="entry name" value="tRNAsynth_Ia_anticodon-bd"/>
</dbReference>
<dbReference type="NCBIfam" id="TIGR00456">
    <property type="entry name" value="argS"/>
    <property type="match status" value="1"/>
</dbReference>
<dbReference type="PANTHER" id="PTHR11956:SF5">
    <property type="entry name" value="ARGININE--TRNA LIGASE, CYTOPLASMIC"/>
    <property type="match status" value="1"/>
</dbReference>
<dbReference type="PANTHER" id="PTHR11956">
    <property type="entry name" value="ARGINYL-TRNA SYNTHETASE"/>
    <property type="match status" value="1"/>
</dbReference>
<dbReference type="Pfam" id="PF03485">
    <property type="entry name" value="Arg_tRNA_synt_N"/>
    <property type="match status" value="1"/>
</dbReference>
<dbReference type="Pfam" id="PF05746">
    <property type="entry name" value="DALR_1"/>
    <property type="match status" value="1"/>
</dbReference>
<dbReference type="Pfam" id="PF00750">
    <property type="entry name" value="tRNA-synt_1d"/>
    <property type="match status" value="1"/>
</dbReference>
<dbReference type="PRINTS" id="PR01038">
    <property type="entry name" value="TRNASYNTHARG"/>
</dbReference>
<dbReference type="SMART" id="SM01016">
    <property type="entry name" value="Arg_tRNA_synt_N"/>
    <property type="match status" value="1"/>
</dbReference>
<dbReference type="SMART" id="SM00836">
    <property type="entry name" value="DALR_1"/>
    <property type="match status" value="1"/>
</dbReference>
<dbReference type="SUPFAM" id="SSF47323">
    <property type="entry name" value="Anticodon-binding domain of a subclass of class I aminoacyl-tRNA synthetases"/>
    <property type="match status" value="1"/>
</dbReference>
<dbReference type="SUPFAM" id="SSF55190">
    <property type="entry name" value="Arginyl-tRNA synthetase (ArgRS), N-terminal 'additional' domain"/>
    <property type="match status" value="1"/>
</dbReference>
<dbReference type="SUPFAM" id="SSF52374">
    <property type="entry name" value="Nucleotidylyl transferase"/>
    <property type="match status" value="1"/>
</dbReference>
<dbReference type="PROSITE" id="PS00178">
    <property type="entry name" value="AA_TRNA_LIGASE_I"/>
    <property type="match status" value="1"/>
</dbReference>
<protein>
    <recommendedName>
        <fullName evidence="1">Arginine--tRNA ligase</fullName>
        <ecNumber evidence="1">6.1.1.19</ecNumber>
    </recommendedName>
    <alternativeName>
        <fullName evidence="1">Arginyl-tRNA synthetase</fullName>
        <shortName evidence="1">ArgRS</shortName>
    </alternativeName>
</protein>
<evidence type="ECO:0000255" key="1">
    <source>
        <dbReference type="HAMAP-Rule" id="MF_00123"/>
    </source>
</evidence>
<name>SYR_ACTSZ</name>
<gene>
    <name evidence="1" type="primary">argS</name>
    <name type="ordered locus">Asuc_1094</name>
</gene>
<feature type="chain" id="PRO_1000071392" description="Arginine--tRNA ligase">
    <location>
        <begin position="1"/>
        <end position="575"/>
    </location>
</feature>
<feature type="short sequence motif" description="'HIGH' region">
    <location>
        <begin position="122"/>
        <end position="132"/>
    </location>
</feature>